<accession>B6EL39</accession>
<protein>
    <recommendedName>
        <fullName evidence="1">Malate dehydrogenase</fullName>
        <ecNumber evidence="1">1.1.1.37</ecNumber>
    </recommendedName>
</protein>
<feature type="chain" id="PRO_1000146167" description="Malate dehydrogenase">
    <location>
        <begin position="1"/>
        <end position="311"/>
    </location>
</feature>
<feature type="active site" description="Proton acceptor" evidence="1">
    <location>
        <position position="177"/>
    </location>
</feature>
<feature type="binding site" evidence="1">
    <location>
        <begin position="7"/>
        <end position="13"/>
    </location>
    <ligand>
        <name>NAD(+)</name>
        <dbReference type="ChEBI" id="CHEBI:57540"/>
    </ligand>
</feature>
<feature type="binding site" evidence="1">
    <location>
        <position position="34"/>
    </location>
    <ligand>
        <name>NAD(+)</name>
        <dbReference type="ChEBI" id="CHEBI:57540"/>
    </ligand>
</feature>
<feature type="binding site" evidence="1">
    <location>
        <position position="81"/>
    </location>
    <ligand>
        <name>substrate</name>
    </ligand>
</feature>
<feature type="binding site" evidence="1">
    <location>
        <position position="87"/>
    </location>
    <ligand>
        <name>substrate</name>
    </ligand>
</feature>
<feature type="binding site" evidence="1">
    <location>
        <position position="94"/>
    </location>
    <ligand>
        <name>NAD(+)</name>
        <dbReference type="ChEBI" id="CHEBI:57540"/>
    </ligand>
</feature>
<feature type="binding site" evidence="1">
    <location>
        <begin position="117"/>
        <end position="119"/>
    </location>
    <ligand>
        <name>NAD(+)</name>
        <dbReference type="ChEBI" id="CHEBI:57540"/>
    </ligand>
</feature>
<feature type="binding site" evidence="1">
    <location>
        <position position="119"/>
    </location>
    <ligand>
        <name>substrate</name>
    </ligand>
</feature>
<feature type="binding site" evidence="1">
    <location>
        <position position="153"/>
    </location>
    <ligand>
        <name>substrate</name>
    </ligand>
</feature>
<feature type="binding site" evidence="1">
    <location>
        <position position="227"/>
    </location>
    <ligand>
        <name>NAD(+)</name>
        <dbReference type="ChEBI" id="CHEBI:57540"/>
    </ligand>
</feature>
<gene>
    <name evidence="1" type="primary">mdh</name>
    <name type="ordered locus">VSAL_I0359</name>
</gene>
<keyword id="KW-0520">NAD</keyword>
<keyword id="KW-0560">Oxidoreductase</keyword>
<keyword id="KW-0816">Tricarboxylic acid cycle</keyword>
<comment type="function">
    <text evidence="1">Catalyzes the reversible oxidation of malate to oxaloacetate.</text>
</comment>
<comment type="catalytic activity">
    <reaction evidence="1">
        <text>(S)-malate + NAD(+) = oxaloacetate + NADH + H(+)</text>
        <dbReference type="Rhea" id="RHEA:21432"/>
        <dbReference type="ChEBI" id="CHEBI:15378"/>
        <dbReference type="ChEBI" id="CHEBI:15589"/>
        <dbReference type="ChEBI" id="CHEBI:16452"/>
        <dbReference type="ChEBI" id="CHEBI:57540"/>
        <dbReference type="ChEBI" id="CHEBI:57945"/>
        <dbReference type="EC" id="1.1.1.37"/>
    </reaction>
</comment>
<comment type="subunit">
    <text evidence="1">Homodimer.</text>
</comment>
<comment type="similarity">
    <text evidence="1">Belongs to the LDH/MDH superfamily. MDH type 1 family.</text>
</comment>
<organism>
    <name type="scientific">Aliivibrio salmonicida (strain LFI1238)</name>
    <name type="common">Vibrio salmonicida (strain LFI1238)</name>
    <dbReference type="NCBI Taxonomy" id="316275"/>
    <lineage>
        <taxon>Bacteria</taxon>
        <taxon>Pseudomonadati</taxon>
        <taxon>Pseudomonadota</taxon>
        <taxon>Gammaproteobacteria</taxon>
        <taxon>Vibrionales</taxon>
        <taxon>Vibrionaceae</taxon>
        <taxon>Aliivibrio</taxon>
    </lineage>
</organism>
<name>MDH_ALISL</name>
<evidence type="ECO:0000255" key="1">
    <source>
        <dbReference type="HAMAP-Rule" id="MF_01516"/>
    </source>
</evidence>
<proteinExistence type="inferred from homology"/>
<dbReference type="EC" id="1.1.1.37" evidence="1"/>
<dbReference type="EMBL" id="FM178379">
    <property type="protein sequence ID" value="CAQ78044.1"/>
    <property type="molecule type" value="Genomic_DNA"/>
</dbReference>
<dbReference type="RefSeq" id="WP_012549186.1">
    <property type="nucleotide sequence ID" value="NC_011312.1"/>
</dbReference>
<dbReference type="SMR" id="B6EL39"/>
<dbReference type="KEGG" id="vsa:VSAL_I0359"/>
<dbReference type="eggNOG" id="COG0039">
    <property type="taxonomic scope" value="Bacteria"/>
</dbReference>
<dbReference type="HOGENOM" id="CLU_047181_1_0_6"/>
<dbReference type="Proteomes" id="UP000001730">
    <property type="component" value="Chromosome 1"/>
</dbReference>
<dbReference type="GO" id="GO:0005737">
    <property type="term" value="C:cytoplasm"/>
    <property type="evidence" value="ECO:0007669"/>
    <property type="project" value="TreeGrafter"/>
</dbReference>
<dbReference type="GO" id="GO:0030060">
    <property type="term" value="F:L-malate dehydrogenase (NAD+) activity"/>
    <property type="evidence" value="ECO:0007669"/>
    <property type="project" value="UniProtKB-UniRule"/>
</dbReference>
<dbReference type="GO" id="GO:0006108">
    <property type="term" value="P:malate metabolic process"/>
    <property type="evidence" value="ECO:0007669"/>
    <property type="project" value="InterPro"/>
</dbReference>
<dbReference type="GO" id="GO:0006099">
    <property type="term" value="P:tricarboxylic acid cycle"/>
    <property type="evidence" value="ECO:0007669"/>
    <property type="project" value="UniProtKB-UniRule"/>
</dbReference>
<dbReference type="CDD" id="cd01337">
    <property type="entry name" value="MDH_glyoxysomal_mitochondrial"/>
    <property type="match status" value="1"/>
</dbReference>
<dbReference type="FunFam" id="3.40.50.720:FF:000017">
    <property type="entry name" value="Malate dehydrogenase"/>
    <property type="match status" value="1"/>
</dbReference>
<dbReference type="FunFam" id="3.90.110.10:FF:000001">
    <property type="entry name" value="Malate dehydrogenase"/>
    <property type="match status" value="1"/>
</dbReference>
<dbReference type="Gene3D" id="3.90.110.10">
    <property type="entry name" value="Lactate dehydrogenase/glycoside hydrolase, family 4, C-terminal"/>
    <property type="match status" value="1"/>
</dbReference>
<dbReference type="Gene3D" id="3.40.50.720">
    <property type="entry name" value="NAD(P)-binding Rossmann-like Domain"/>
    <property type="match status" value="1"/>
</dbReference>
<dbReference type="HAMAP" id="MF_01516">
    <property type="entry name" value="Malate_dehydrog_1"/>
    <property type="match status" value="1"/>
</dbReference>
<dbReference type="InterPro" id="IPR001557">
    <property type="entry name" value="L-lactate/malate_DH"/>
</dbReference>
<dbReference type="InterPro" id="IPR022383">
    <property type="entry name" value="Lactate/malate_DH_C"/>
</dbReference>
<dbReference type="InterPro" id="IPR001236">
    <property type="entry name" value="Lactate/malate_DH_N"/>
</dbReference>
<dbReference type="InterPro" id="IPR015955">
    <property type="entry name" value="Lactate_DH/Glyco_Ohase_4_C"/>
</dbReference>
<dbReference type="InterPro" id="IPR001252">
    <property type="entry name" value="Malate_DH_AS"/>
</dbReference>
<dbReference type="InterPro" id="IPR010097">
    <property type="entry name" value="Malate_DH_type1"/>
</dbReference>
<dbReference type="InterPro" id="IPR023958">
    <property type="entry name" value="Malate_DH_type1_bac"/>
</dbReference>
<dbReference type="InterPro" id="IPR036291">
    <property type="entry name" value="NAD(P)-bd_dom_sf"/>
</dbReference>
<dbReference type="NCBIfam" id="TIGR01772">
    <property type="entry name" value="MDH_euk_gproteo"/>
    <property type="match status" value="1"/>
</dbReference>
<dbReference type="PANTHER" id="PTHR11540">
    <property type="entry name" value="MALATE AND LACTATE DEHYDROGENASE"/>
    <property type="match status" value="1"/>
</dbReference>
<dbReference type="PANTHER" id="PTHR11540:SF16">
    <property type="entry name" value="MALATE DEHYDROGENASE, MITOCHONDRIAL"/>
    <property type="match status" value="1"/>
</dbReference>
<dbReference type="Pfam" id="PF02866">
    <property type="entry name" value="Ldh_1_C"/>
    <property type="match status" value="1"/>
</dbReference>
<dbReference type="Pfam" id="PF00056">
    <property type="entry name" value="Ldh_1_N"/>
    <property type="match status" value="1"/>
</dbReference>
<dbReference type="PIRSF" id="PIRSF000102">
    <property type="entry name" value="Lac_mal_DH"/>
    <property type="match status" value="1"/>
</dbReference>
<dbReference type="SUPFAM" id="SSF56327">
    <property type="entry name" value="LDH C-terminal domain-like"/>
    <property type="match status" value="1"/>
</dbReference>
<dbReference type="SUPFAM" id="SSF51735">
    <property type="entry name" value="NAD(P)-binding Rossmann-fold domains"/>
    <property type="match status" value="1"/>
</dbReference>
<dbReference type="PROSITE" id="PS00068">
    <property type="entry name" value="MDH"/>
    <property type="match status" value="1"/>
</dbReference>
<sequence>MKVAVIGAAGGIGQALALLLKNRLPAGSDLALYDIAPVTPGVAADLSHIPTPVSIKGYCGEDPTPALEGADVVLISAGVARKPGMDRSDLFNINAGIVKSLAEKIAVTCPKACIGIITNPVNTTVAIAAEVLKKAGVYDKNKLFGVTTLDVIRSETFVAELKGKNPGEICVPVIGGHSGVTILPLLSQVEGVEFTAEEVAALTPRIQNAGTEVVEAKAGGGSATLSMGQAACRFGLSLVKALSGEKGVVECAYVEGNGEHARFFAQPILLGKNGVEEIQHYGELSTFEQDALDSMLDTLKADIKIGEEFIK</sequence>
<reference key="1">
    <citation type="journal article" date="2008" name="BMC Genomics">
        <title>The genome sequence of the fish pathogen Aliivibrio salmonicida strain LFI1238 shows extensive evidence of gene decay.</title>
        <authorList>
            <person name="Hjerde E."/>
            <person name="Lorentzen M.S."/>
            <person name="Holden M.T."/>
            <person name="Seeger K."/>
            <person name="Paulsen S."/>
            <person name="Bason N."/>
            <person name="Churcher C."/>
            <person name="Harris D."/>
            <person name="Norbertczak H."/>
            <person name="Quail M.A."/>
            <person name="Sanders S."/>
            <person name="Thurston S."/>
            <person name="Parkhill J."/>
            <person name="Willassen N.P."/>
            <person name="Thomson N.R."/>
        </authorList>
    </citation>
    <scope>NUCLEOTIDE SEQUENCE [LARGE SCALE GENOMIC DNA]</scope>
    <source>
        <strain>LFI1238</strain>
    </source>
</reference>